<evidence type="ECO:0000250" key="1"/>
<evidence type="ECO:0000305" key="2"/>
<name>RR4_CANTA</name>
<gene>
    <name type="primary">rps4</name>
</gene>
<protein>
    <recommendedName>
        <fullName evidence="2">Small ribosomal subunit protein uS4c</fullName>
    </recommendedName>
    <alternativeName>
        <fullName>30S ribosomal protein S4, chloroplastic</fullName>
    </alternativeName>
</protein>
<geneLocation type="chloroplast"/>
<organism>
    <name type="scientific">Canalohypopterygium tamariscinum</name>
    <name type="common">Moss</name>
    <dbReference type="NCBI Taxonomy" id="98735"/>
    <lineage>
        <taxon>Eukaryota</taxon>
        <taxon>Viridiplantae</taxon>
        <taxon>Streptophyta</taxon>
        <taxon>Embryophyta</taxon>
        <taxon>Bryophyta</taxon>
        <taxon>Bryophytina</taxon>
        <taxon>Bryopsida</taxon>
        <taxon>Bryidae</taxon>
        <taxon>Hypnanae</taxon>
        <taxon>Hookeriales</taxon>
        <taxon>Hypopterygiaceae</taxon>
        <taxon>Canalohypopterygium</taxon>
    </lineage>
</organism>
<comment type="function">
    <text evidence="1">One of the primary rRNA binding proteins, it binds directly to 16S rRNA where it nucleates assembly of the body of the 30S subunit.</text>
</comment>
<comment type="function">
    <text evidence="1">With S5 and S12 plays an important role in translational accuracy.</text>
</comment>
<comment type="subunit">
    <text evidence="1">Part of the 30S ribosomal subunit. Contacts protein S5. The interaction surface between S4 and S5 is involved in control of translational fidelity (By similarity).</text>
</comment>
<comment type="subcellular location">
    <subcellularLocation>
        <location>Plastid</location>
        <location>Chloroplast</location>
    </subcellularLocation>
</comment>
<comment type="similarity">
    <text evidence="2">Belongs to the universal ribosomal protein uS4 family.</text>
</comment>
<dbReference type="EMBL" id="AJ269694">
    <property type="protein sequence ID" value="CAC80634.1"/>
    <property type="molecule type" value="Genomic_DNA"/>
</dbReference>
<dbReference type="SMR" id="P59136"/>
<dbReference type="GO" id="GO:0009507">
    <property type="term" value="C:chloroplast"/>
    <property type="evidence" value="ECO:0007669"/>
    <property type="project" value="UniProtKB-SubCell"/>
</dbReference>
<dbReference type="GO" id="GO:0015935">
    <property type="term" value="C:small ribosomal subunit"/>
    <property type="evidence" value="ECO:0007669"/>
    <property type="project" value="InterPro"/>
</dbReference>
<dbReference type="GO" id="GO:0019843">
    <property type="term" value="F:rRNA binding"/>
    <property type="evidence" value="ECO:0007669"/>
    <property type="project" value="UniProtKB-UniRule"/>
</dbReference>
<dbReference type="GO" id="GO:0003735">
    <property type="term" value="F:structural constituent of ribosome"/>
    <property type="evidence" value="ECO:0007669"/>
    <property type="project" value="InterPro"/>
</dbReference>
<dbReference type="GO" id="GO:0042274">
    <property type="term" value="P:ribosomal small subunit biogenesis"/>
    <property type="evidence" value="ECO:0007669"/>
    <property type="project" value="TreeGrafter"/>
</dbReference>
<dbReference type="GO" id="GO:0006412">
    <property type="term" value="P:translation"/>
    <property type="evidence" value="ECO:0007669"/>
    <property type="project" value="UniProtKB-UniRule"/>
</dbReference>
<dbReference type="CDD" id="cd00165">
    <property type="entry name" value="S4"/>
    <property type="match status" value="1"/>
</dbReference>
<dbReference type="FunFam" id="1.10.1050.10:FF:000002">
    <property type="entry name" value="30S ribosomal protein S4, chloroplastic"/>
    <property type="match status" value="1"/>
</dbReference>
<dbReference type="FunFam" id="3.10.290.10:FF:000081">
    <property type="entry name" value="30S ribosomal protein S4, chloroplastic"/>
    <property type="match status" value="1"/>
</dbReference>
<dbReference type="Gene3D" id="1.10.1050.10">
    <property type="entry name" value="Ribosomal Protein S4 Delta 41, Chain A, domain 1"/>
    <property type="match status" value="1"/>
</dbReference>
<dbReference type="Gene3D" id="3.10.290.10">
    <property type="entry name" value="RNA-binding S4 domain"/>
    <property type="match status" value="1"/>
</dbReference>
<dbReference type="HAMAP" id="MF_01306_B">
    <property type="entry name" value="Ribosomal_uS4_B"/>
    <property type="match status" value="1"/>
</dbReference>
<dbReference type="InterPro" id="IPR022801">
    <property type="entry name" value="Ribosomal_uS4"/>
</dbReference>
<dbReference type="InterPro" id="IPR005709">
    <property type="entry name" value="Ribosomal_uS4_bac-type"/>
</dbReference>
<dbReference type="InterPro" id="IPR018079">
    <property type="entry name" value="Ribosomal_uS4_CS"/>
</dbReference>
<dbReference type="InterPro" id="IPR001912">
    <property type="entry name" value="Ribosomal_uS4_N"/>
</dbReference>
<dbReference type="InterPro" id="IPR002942">
    <property type="entry name" value="S4_RNA-bd"/>
</dbReference>
<dbReference type="InterPro" id="IPR036986">
    <property type="entry name" value="S4_RNA-bd_sf"/>
</dbReference>
<dbReference type="NCBIfam" id="NF003717">
    <property type="entry name" value="PRK05327.1"/>
    <property type="match status" value="1"/>
</dbReference>
<dbReference type="NCBIfam" id="TIGR01017">
    <property type="entry name" value="rpsD_bact"/>
    <property type="match status" value="1"/>
</dbReference>
<dbReference type="PANTHER" id="PTHR11831">
    <property type="entry name" value="30S 40S RIBOSOMAL PROTEIN"/>
    <property type="match status" value="1"/>
</dbReference>
<dbReference type="PANTHER" id="PTHR11831:SF4">
    <property type="entry name" value="SMALL RIBOSOMAL SUBUNIT PROTEIN US4M"/>
    <property type="match status" value="1"/>
</dbReference>
<dbReference type="Pfam" id="PF00163">
    <property type="entry name" value="Ribosomal_S4"/>
    <property type="match status" value="1"/>
</dbReference>
<dbReference type="Pfam" id="PF01479">
    <property type="entry name" value="S4"/>
    <property type="match status" value="1"/>
</dbReference>
<dbReference type="SMART" id="SM01390">
    <property type="entry name" value="Ribosomal_S4"/>
    <property type="match status" value="1"/>
</dbReference>
<dbReference type="SMART" id="SM00363">
    <property type="entry name" value="S4"/>
    <property type="match status" value="1"/>
</dbReference>
<dbReference type="SUPFAM" id="SSF55174">
    <property type="entry name" value="Alpha-L RNA-binding motif"/>
    <property type="match status" value="1"/>
</dbReference>
<dbReference type="PROSITE" id="PS00632">
    <property type="entry name" value="RIBOSOMAL_S4"/>
    <property type="match status" value="1"/>
</dbReference>
<dbReference type="PROSITE" id="PS50889">
    <property type="entry name" value="S4"/>
    <property type="match status" value="1"/>
</dbReference>
<reference key="1">
    <citation type="journal article" date="2002" name="Cryptogam. Bryol.">
        <title>The systematic position of the Hypoptergiaceae (Bryopsida) inferred from rps4 gene sequences.</title>
        <authorList>
            <person name="Bloecher R."/>
            <person name="Capesius I."/>
        </authorList>
    </citation>
    <scope>NUCLEOTIDE SEQUENCE [GENOMIC DNA]</scope>
    <source>
        <tissue>Gametophyte</tissue>
    </source>
</reference>
<proteinExistence type="inferred from homology"/>
<accession>P59136</accession>
<keyword id="KW-0150">Chloroplast</keyword>
<keyword id="KW-0934">Plastid</keyword>
<keyword id="KW-0687">Ribonucleoprotein</keyword>
<keyword id="KW-0689">Ribosomal protein</keyword>
<keyword id="KW-0694">RNA-binding</keyword>
<keyword id="KW-0699">rRNA-binding</keyword>
<sequence>MSRYRGPRVKIIRRLGALPGLTNKTPQLKSSPINQSTSNKKISQYRIRLEEKQKLRFHYGITERQLLNYVRIARKAKGSTGEILLQLLEMRLDNVIFRLGMSPTIPGARQLVNHRHILVNGHIVDIPSYRCKPQDFITIKNQRKSQAIINKNMNFYRKYKIPNHLIYNSLDKKGLVNQILDRESIGLKINELLVVEYYSRQA</sequence>
<feature type="chain" id="PRO_0000132552" description="Small ribosomal subunit protein uS4c">
    <location>
        <begin position="1"/>
        <end position="202"/>
    </location>
</feature>
<feature type="domain" description="S4 RNA-binding">
    <location>
        <begin position="90"/>
        <end position="150"/>
    </location>
</feature>